<organism>
    <name type="scientific">Salmonella typhimurium (strain 14028s / SGSC 2262)</name>
    <dbReference type="NCBI Taxonomy" id="588858"/>
    <lineage>
        <taxon>Bacteria</taxon>
        <taxon>Pseudomonadati</taxon>
        <taxon>Pseudomonadota</taxon>
        <taxon>Gammaproteobacteria</taxon>
        <taxon>Enterobacterales</taxon>
        <taxon>Enterobacteriaceae</taxon>
        <taxon>Salmonella</taxon>
    </lineage>
</organism>
<accession>A0A0F6B244</accession>
<keyword id="KW-0175">Coiled coil</keyword>
<keyword id="KW-0963">Cytoplasm</keyword>
<keyword id="KW-0238">DNA-binding</keyword>
<keyword id="KW-0804">Transcription</keyword>
<keyword id="KW-0805">Transcription regulation</keyword>
<evidence type="ECO:0000250" key="1">
    <source>
        <dbReference type="UniProtKB" id="P0A1S2"/>
    </source>
</evidence>
<evidence type="ECO:0000250" key="2">
    <source>
        <dbReference type="UniProtKB" id="P0ACF8"/>
    </source>
</evidence>
<evidence type="ECO:0000255" key="3"/>
<evidence type="ECO:0000269" key="4">
    <source>
    </source>
</evidence>
<dbReference type="EMBL" id="CP001363">
    <property type="protein sequence ID" value="ACY88582.1"/>
    <property type="molecule type" value="Genomic_DNA"/>
</dbReference>
<dbReference type="RefSeq" id="WP_001287383.1">
    <property type="nucleotide sequence ID" value="NZ_CP043402.1"/>
</dbReference>
<dbReference type="SMR" id="A0A0F6B244"/>
<dbReference type="GeneID" id="66756227"/>
<dbReference type="KEGG" id="seo:STM14_2116"/>
<dbReference type="PATRIC" id="fig|588858.6.peg.1994"/>
<dbReference type="HOGENOM" id="CLU_117503_0_0_6"/>
<dbReference type="BioCyc" id="SENT588858:STM14_RS09650-MONOMER"/>
<dbReference type="Proteomes" id="UP000002695">
    <property type="component" value="Chromosome"/>
</dbReference>
<dbReference type="GO" id="GO:0005829">
    <property type="term" value="C:cytosol"/>
    <property type="evidence" value="ECO:0007669"/>
    <property type="project" value="TreeGrafter"/>
</dbReference>
<dbReference type="GO" id="GO:0009295">
    <property type="term" value="C:nucleoid"/>
    <property type="evidence" value="ECO:0007669"/>
    <property type="project" value="UniProtKB-SubCell"/>
</dbReference>
<dbReference type="GO" id="GO:0032993">
    <property type="term" value="C:protein-DNA complex"/>
    <property type="evidence" value="ECO:0007669"/>
    <property type="project" value="TreeGrafter"/>
</dbReference>
<dbReference type="GO" id="GO:0003681">
    <property type="term" value="F:bent DNA binding"/>
    <property type="evidence" value="ECO:0007669"/>
    <property type="project" value="TreeGrafter"/>
</dbReference>
<dbReference type="GO" id="GO:0001217">
    <property type="term" value="F:DNA-binding transcription repressor activity"/>
    <property type="evidence" value="ECO:0007669"/>
    <property type="project" value="TreeGrafter"/>
</dbReference>
<dbReference type="GO" id="GO:0003680">
    <property type="term" value="F:minor groove of adenine-thymine-rich DNA binding"/>
    <property type="evidence" value="ECO:0007669"/>
    <property type="project" value="TreeGrafter"/>
</dbReference>
<dbReference type="GO" id="GO:0046983">
    <property type="term" value="F:protein dimerization activity"/>
    <property type="evidence" value="ECO:0007669"/>
    <property type="project" value="InterPro"/>
</dbReference>
<dbReference type="GO" id="GO:0030527">
    <property type="term" value="F:structural constituent of chromatin"/>
    <property type="evidence" value="ECO:0007669"/>
    <property type="project" value="InterPro"/>
</dbReference>
<dbReference type="GO" id="GO:0000976">
    <property type="term" value="F:transcription cis-regulatory region binding"/>
    <property type="evidence" value="ECO:0007669"/>
    <property type="project" value="TreeGrafter"/>
</dbReference>
<dbReference type="FunFam" id="1.10.287.1050:FF:000001">
    <property type="entry name" value="DNA-binding protein"/>
    <property type="match status" value="1"/>
</dbReference>
<dbReference type="FunFam" id="4.10.430.10:FF:000001">
    <property type="entry name" value="DNA-binding protein"/>
    <property type="match status" value="1"/>
</dbReference>
<dbReference type="Gene3D" id="1.10.287.1050">
    <property type="entry name" value="H-NS histone-like proteins"/>
    <property type="match status" value="1"/>
</dbReference>
<dbReference type="Gene3D" id="4.10.430.10">
    <property type="entry name" value="Histone-like protein H-NS, C-terminal domain"/>
    <property type="match status" value="1"/>
</dbReference>
<dbReference type="InterPro" id="IPR054180">
    <property type="entry name" value="H-NS-like_N"/>
</dbReference>
<dbReference type="InterPro" id="IPR027444">
    <property type="entry name" value="H-NS_C_dom"/>
</dbReference>
<dbReference type="InterPro" id="IPR037150">
    <property type="entry name" value="H-NS_C_dom_sf"/>
</dbReference>
<dbReference type="InterPro" id="IPR001801">
    <property type="entry name" value="Histone_HNS"/>
</dbReference>
<dbReference type="InterPro" id="IPR027454">
    <property type="entry name" value="Histone_HNS_N"/>
</dbReference>
<dbReference type="NCBIfam" id="NF008193">
    <property type="entry name" value="PRK10947.1"/>
    <property type="match status" value="1"/>
</dbReference>
<dbReference type="PANTHER" id="PTHR38097">
    <property type="match status" value="1"/>
</dbReference>
<dbReference type="PANTHER" id="PTHR38097:SF1">
    <property type="entry name" value="DNA-BINDING PROTEIN H-NS"/>
    <property type="match status" value="1"/>
</dbReference>
<dbReference type="Pfam" id="PF00816">
    <property type="entry name" value="Histone_HNS"/>
    <property type="match status" value="1"/>
</dbReference>
<dbReference type="Pfam" id="PF22470">
    <property type="entry name" value="Histone_HNS_N"/>
    <property type="match status" value="1"/>
</dbReference>
<dbReference type="PIRSF" id="PIRSF002096">
    <property type="entry name" value="HnS"/>
    <property type="match status" value="1"/>
</dbReference>
<dbReference type="SMART" id="SM00528">
    <property type="entry name" value="HNS"/>
    <property type="match status" value="1"/>
</dbReference>
<dbReference type="SUPFAM" id="SSF81273">
    <property type="entry name" value="H-NS histone-like proteins"/>
    <property type="match status" value="2"/>
</dbReference>
<sequence length="137" mass="15543">MSEALKILNNIRTLRAQARECTLETLEEMLEKLEVVVNERREEESAAAAEVEERTRKLQQYREMLIADGIDPNELLNSMAAAKSGTKAKRAARPAKYSYVDENGETKTWTGQGRTPAVIKKAMEEQGKQLEDFLIKE</sequence>
<reference key="1">
    <citation type="journal article" date="2010" name="J. Bacteriol.">
        <title>Short-term signatures of evolutionary change in the Salmonella enterica serovar typhimurium 14028 genome.</title>
        <authorList>
            <person name="Jarvik T."/>
            <person name="Smillie C."/>
            <person name="Groisman E.A."/>
            <person name="Ochman H."/>
        </authorList>
    </citation>
    <scope>NUCLEOTIDE SEQUENCE [LARGE SCALE GENOMIC DNA]</scope>
    <source>
        <strain>14028s / SGSC 2262</strain>
    </source>
</reference>
<reference key="2">
    <citation type="journal article" date="2006" name="Science">
        <title>Selective silencing of foreign DNA with low GC content by the H-NS protein in Salmonella.</title>
        <authorList>
            <person name="Navarre W.W."/>
            <person name="Porwollik S."/>
            <person name="Wang Y."/>
            <person name="McClelland M."/>
            <person name="Rosen H."/>
            <person name="Libby S.J."/>
            <person name="Fang F.C."/>
        </authorList>
    </citation>
    <scope>FUNCTION IN SILENCING AT-RICH DNA</scope>
    <scope>REGULON</scope>
    <scope>DISRUPTION PHENOTYPE</scope>
    <source>
        <strain>14028s / SGSC 2262</strain>
    </source>
</reference>
<gene>
    <name type="primary">hns</name>
    <name type="ordered locus">STM14_2116</name>
</gene>
<comment type="function">
    <text evidence="2 4">A DNA-binding protein implicated in transcriptional repression and chromosome organization and compaction. Binds AT-rich DNA, repressing its transcription; about 754/4438 tested genes (15%) bind to H-NS, 70% of these are AT-rich and correspond to horizontally transferred geness (HTG), thus playing a central role in silencing foreign genes (PubMed:16763111). This offers the selective advantage of silencing foreign DNA (PubMed:16763111). Binds nucleation sites in AT-rich DNA and bridges them, forming higher-order nucleoprotein complexes and condensing the chromosome (By similarity). A subset of genes are repressed by H-NS in association with Hha and/or YdgT (By similarity).</text>
</comment>
<comment type="subunit">
    <text evidence="2">Homodimer that oligomerizes on DNA into higher-order complexes that form bridges between disparate regions of DNA compacting it. Interacts with Hha, YdgT and StpA.</text>
</comment>
<comment type="subcellular location">
    <subcellularLocation>
        <location evidence="2">Cytoplasm</location>
        <location evidence="2">Nucleoid</location>
    </subcellularLocation>
</comment>
<comment type="disruption phenotype">
    <text evidence="4">Essential, it cannot be deleted unless additional mutations in rpoS and/or phoP are present; hns-rpoS or hns-phoP mutants grow slowly while triple mutants grow like wild-type. In a double hns-rpoS mutant 178 genes are down-regulated while 409/4529 were up-regulated compared to wild-type.</text>
</comment>
<comment type="similarity">
    <text>Belongs to the histone-like protein H-NS family.</text>
</comment>
<proteinExistence type="evidence at protein level"/>
<feature type="chain" id="PRO_0000436893" description="DNA-binding protein H-NS">
    <location>
        <begin position="1"/>
        <end position="137"/>
    </location>
</feature>
<feature type="DNA-binding region" evidence="1">
    <location>
        <begin position="112"/>
        <end position="117"/>
    </location>
</feature>
<feature type="coiled-coil region" evidence="3">
    <location>
        <begin position="13"/>
        <end position="65"/>
    </location>
</feature>
<name>HNS_SALT1</name>
<protein>
    <recommendedName>
        <fullName>DNA-binding protein H-NS</fullName>
    </recommendedName>
</protein>